<dbReference type="EC" id="3.4.16.4" evidence="1"/>
<dbReference type="EMBL" id="M32091">
    <property type="protein sequence ID" value="AAA25463.1"/>
    <property type="molecule type" value="Genomic_DNA"/>
</dbReference>
<dbReference type="EMBL" id="X07468">
    <property type="protein sequence ID" value="CAA30356.1"/>
    <property type="molecule type" value="Genomic_DNA"/>
</dbReference>
<dbReference type="EMBL" id="X07469">
    <property type="protein sequence ID" value="CAA30357.1"/>
    <property type="molecule type" value="Genomic_DNA"/>
</dbReference>
<dbReference type="EMBL" id="X07470">
    <property type="protein sequence ID" value="CAA30358.1"/>
    <property type="molecule type" value="Genomic_DNA"/>
</dbReference>
<dbReference type="PIR" id="S00916">
    <property type="entry name" value="S00916"/>
</dbReference>
<dbReference type="RefSeq" id="WP_003695531.1">
    <property type="nucleotide sequence ID" value="NZ_UGRJ01000003.1"/>
</dbReference>
<dbReference type="RefSeq" id="WP_003703066.1">
    <property type="nucleotide sequence ID" value="NZ_UGRK01000002.1"/>
</dbReference>
<dbReference type="RefSeq" id="WP_010360711.1">
    <property type="nucleotide sequence ID" value="NZ_VCDA01000017.1"/>
</dbReference>
<dbReference type="RefSeq" id="WP_047917829.1">
    <property type="nucleotide sequence ID" value="NZ_SURE01000013.1"/>
</dbReference>
<dbReference type="PDB" id="3EQU">
    <property type="method" value="X-ray"/>
    <property type="resolution" value="2.40 A"/>
    <property type="chains" value="A/B=44-581"/>
</dbReference>
<dbReference type="PDB" id="3EQV">
    <property type="method" value="X-ray"/>
    <property type="resolution" value="2.40 A"/>
    <property type="chains" value="A/B=44-581"/>
</dbReference>
<dbReference type="PDB" id="4U3T">
    <property type="method" value="X-ray"/>
    <property type="resolution" value="2.20 A"/>
    <property type="chains" value="A/B=237-574"/>
</dbReference>
<dbReference type="PDB" id="5KSH">
    <property type="method" value="X-ray"/>
    <property type="resolution" value="2.40 A"/>
    <property type="chains" value="A/B=44-581"/>
</dbReference>
<dbReference type="PDB" id="6HZJ">
    <property type="method" value="X-ray"/>
    <property type="resolution" value="1.43 A"/>
    <property type="chains" value="A/B=238-581"/>
</dbReference>
<dbReference type="PDB" id="6P52">
    <property type="method" value="X-ray"/>
    <property type="resolution" value="1.83 A"/>
    <property type="chains" value="A/B=237-574"/>
</dbReference>
<dbReference type="PDB" id="6P53">
    <property type="method" value="X-ray"/>
    <property type="resolution" value="1.92 A"/>
    <property type="chains" value="A/B=237-574"/>
</dbReference>
<dbReference type="PDB" id="6P54">
    <property type="method" value="X-ray"/>
    <property type="resolution" value="1.83 A"/>
    <property type="chains" value="A/B=237-574"/>
</dbReference>
<dbReference type="PDB" id="6P55">
    <property type="method" value="X-ray"/>
    <property type="resolution" value="1.74 A"/>
    <property type="chains" value="A/B=237-574"/>
</dbReference>
<dbReference type="PDB" id="6P56">
    <property type="method" value="X-ray"/>
    <property type="resolution" value="1.92 A"/>
    <property type="chains" value="A/B=237-574"/>
</dbReference>
<dbReference type="PDB" id="6VBM">
    <property type="method" value="X-ray"/>
    <property type="resolution" value="1.71 A"/>
    <property type="chains" value="A/B=237-574"/>
</dbReference>
<dbReference type="PDB" id="6XQV">
    <property type="method" value="X-ray"/>
    <property type="resolution" value="2.05 A"/>
    <property type="chains" value="A/B=237-282, A/B=298-574"/>
</dbReference>
<dbReference type="PDB" id="6XQX">
    <property type="method" value="X-ray"/>
    <property type="resolution" value="2.15 A"/>
    <property type="chains" value="A/B=237-282, A/B=298-574"/>
</dbReference>
<dbReference type="PDB" id="6XQY">
    <property type="method" value="X-ray"/>
    <property type="resolution" value="1.90 A"/>
    <property type="chains" value="A/B=237-282, A/B=298-574"/>
</dbReference>
<dbReference type="PDB" id="6XQZ">
    <property type="method" value="X-ray"/>
    <property type="resolution" value="2.04 A"/>
    <property type="chains" value="A/B=237-282, A/B=298-574"/>
</dbReference>
<dbReference type="PDBsum" id="3EQU"/>
<dbReference type="PDBsum" id="3EQV"/>
<dbReference type="PDBsum" id="4U3T"/>
<dbReference type="PDBsum" id="5KSH"/>
<dbReference type="PDBsum" id="6HZJ"/>
<dbReference type="PDBsum" id="6P52"/>
<dbReference type="PDBsum" id="6P53"/>
<dbReference type="PDBsum" id="6P54"/>
<dbReference type="PDBsum" id="6P55"/>
<dbReference type="PDBsum" id="6P56"/>
<dbReference type="PDBsum" id="6VBM"/>
<dbReference type="PDBsum" id="6XQV"/>
<dbReference type="PDBsum" id="6XQX"/>
<dbReference type="PDBsum" id="6XQY"/>
<dbReference type="PDBsum" id="6XQZ"/>
<dbReference type="SMR" id="P08149"/>
<dbReference type="IntAct" id="P08149">
    <property type="interactions" value="1"/>
</dbReference>
<dbReference type="MINT" id="P08149"/>
<dbReference type="DrugBank" id="DB00535">
    <property type="generic name" value="Cefdinir"/>
</dbReference>
<dbReference type="MEROPS" id="X52.001"/>
<dbReference type="UniPathway" id="UPA00219"/>
<dbReference type="EvolutionaryTrace" id="P08149"/>
<dbReference type="GO" id="GO:0005886">
    <property type="term" value="C:plasma membrane"/>
    <property type="evidence" value="ECO:0007669"/>
    <property type="project" value="UniProtKB-SubCell"/>
</dbReference>
<dbReference type="GO" id="GO:0008658">
    <property type="term" value="F:penicillin binding"/>
    <property type="evidence" value="ECO:0007669"/>
    <property type="project" value="InterPro"/>
</dbReference>
<dbReference type="GO" id="GO:0008955">
    <property type="term" value="F:peptidoglycan glycosyltransferase activity"/>
    <property type="evidence" value="ECO:0007669"/>
    <property type="project" value="InterPro"/>
</dbReference>
<dbReference type="GO" id="GO:0009002">
    <property type="term" value="F:serine-type D-Ala-D-Ala carboxypeptidase activity"/>
    <property type="evidence" value="ECO:0007669"/>
    <property type="project" value="UniProtKB-UniRule"/>
</dbReference>
<dbReference type="GO" id="GO:0071555">
    <property type="term" value="P:cell wall organization"/>
    <property type="evidence" value="ECO:0007669"/>
    <property type="project" value="UniProtKB-KW"/>
</dbReference>
<dbReference type="GO" id="GO:0000917">
    <property type="term" value="P:division septum assembly"/>
    <property type="evidence" value="ECO:0007669"/>
    <property type="project" value="UniProtKB-KW"/>
</dbReference>
<dbReference type="GO" id="GO:0043093">
    <property type="term" value="P:FtsZ-dependent cytokinesis"/>
    <property type="evidence" value="ECO:0007669"/>
    <property type="project" value="UniProtKB-UniRule"/>
</dbReference>
<dbReference type="GO" id="GO:0009252">
    <property type="term" value="P:peptidoglycan biosynthetic process"/>
    <property type="evidence" value="ECO:0007669"/>
    <property type="project" value="UniProtKB-UniRule"/>
</dbReference>
<dbReference type="GO" id="GO:0006508">
    <property type="term" value="P:proteolysis"/>
    <property type="evidence" value="ECO:0007669"/>
    <property type="project" value="UniProtKB-KW"/>
</dbReference>
<dbReference type="GO" id="GO:0008360">
    <property type="term" value="P:regulation of cell shape"/>
    <property type="evidence" value="ECO:0007669"/>
    <property type="project" value="UniProtKB-KW"/>
</dbReference>
<dbReference type="GO" id="GO:0046677">
    <property type="term" value="P:response to antibiotic"/>
    <property type="evidence" value="ECO:0007669"/>
    <property type="project" value="UniProtKB-KW"/>
</dbReference>
<dbReference type="Gene3D" id="1.10.150.770">
    <property type="match status" value="1"/>
</dbReference>
<dbReference type="Gene3D" id="3.30.450.330">
    <property type="match status" value="1"/>
</dbReference>
<dbReference type="Gene3D" id="3.40.710.10">
    <property type="entry name" value="DD-peptidase/beta-lactamase superfamily"/>
    <property type="match status" value="1"/>
</dbReference>
<dbReference type="Gene3D" id="3.90.1310.10">
    <property type="entry name" value="Penicillin-binding protein 2a (Domain 2)"/>
    <property type="match status" value="1"/>
</dbReference>
<dbReference type="HAMAP" id="MF_02080">
    <property type="entry name" value="FtsI_transpept"/>
    <property type="match status" value="1"/>
</dbReference>
<dbReference type="InterPro" id="IPR050515">
    <property type="entry name" value="Bact_Transpept/Beta-Lactamase"/>
</dbReference>
<dbReference type="InterPro" id="IPR012338">
    <property type="entry name" value="Beta-lactam/transpept-like"/>
</dbReference>
<dbReference type="InterPro" id="IPR037532">
    <property type="entry name" value="FtsI_transpept"/>
</dbReference>
<dbReference type="InterPro" id="IPR005311">
    <property type="entry name" value="PBP_dimer"/>
</dbReference>
<dbReference type="InterPro" id="IPR036138">
    <property type="entry name" value="PBP_dimer_sf"/>
</dbReference>
<dbReference type="InterPro" id="IPR001460">
    <property type="entry name" value="PCN-bd_Tpept"/>
</dbReference>
<dbReference type="PANTHER" id="PTHR30627">
    <property type="entry name" value="PEPTIDOGLYCAN D,D-TRANSPEPTIDASE"/>
    <property type="match status" value="1"/>
</dbReference>
<dbReference type="PANTHER" id="PTHR30627:SF1">
    <property type="entry name" value="PEPTIDOGLYCAN D,D-TRANSPEPTIDASE FTSI"/>
    <property type="match status" value="1"/>
</dbReference>
<dbReference type="Pfam" id="PF03717">
    <property type="entry name" value="PBP_dimer"/>
    <property type="match status" value="1"/>
</dbReference>
<dbReference type="Pfam" id="PF00905">
    <property type="entry name" value="Transpeptidase"/>
    <property type="match status" value="1"/>
</dbReference>
<dbReference type="SUPFAM" id="SSF56601">
    <property type="entry name" value="beta-lactamase/transpeptidase-like"/>
    <property type="match status" value="1"/>
</dbReference>
<dbReference type="SUPFAM" id="SSF56519">
    <property type="entry name" value="Penicillin binding protein dimerisation domain"/>
    <property type="match status" value="1"/>
</dbReference>
<name>PBP2_NEIGO</name>
<comment type="function">
    <text evidence="1">Catalyzes cross-linking of the peptidoglycan cell wall at the division septum.</text>
</comment>
<comment type="catalytic activity">
    <reaction evidence="1">
        <text>Preferential cleavage: (Ac)2-L-Lys-D-Ala-|-D-Ala. Also transpeptidation of peptidyl-alanyl moieties that are N-acyl substituents of D-alanine.</text>
        <dbReference type="EC" id="3.4.16.4"/>
    </reaction>
</comment>
<comment type="pathway">
    <text evidence="1">Cell wall biogenesis; peptidoglycan biosynthesis.</text>
</comment>
<comment type="subcellular location">
    <subcellularLocation>
        <location evidence="1">Cell inner membrane</location>
        <topology evidence="1">Single-pass membrane protein</topology>
    </subcellularLocation>
</comment>
<comment type="domain">
    <text>The enzyme has an N-terminal penicillin insensitive transglycosylase domain (formation of linear glycan strands) and a C-terminal penicillin-sensitive transpeptidase domain (cross-linking of the peptide subunits).</text>
</comment>
<comment type="miscellaneous">
    <text>This protein was sequenced in penicillin-sensitive strains LM306, and FA19, and in penicillin-resistant strains CDC84-060384, CDC84-060418 and CDC77-124615. The sequence shown is that of strain LM306.</text>
</comment>
<comment type="similarity">
    <text evidence="1">Belongs to the transpeptidase family. FtsI subfamily.</text>
</comment>
<feature type="chain" id="PRO_0000195449" description="Probable peptidoglycan D,D-transpeptidase PenA">
    <location>
        <begin position="1"/>
        <end position="581"/>
    </location>
</feature>
<feature type="transmembrane region" description="Helical" evidence="1">
    <location>
        <begin position="28"/>
        <end position="48"/>
    </location>
</feature>
<feature type="active site" description="Acyl-ester intermediate" evidence="1">
    <location>
        <position position="310"/>
    </location>
</feature>
<feature type="sequence variant" description="In strain: CDC84-060418, CDC77-124615 and CDC84-060384.">
    <original>D</original>
    <variation>DD</variation>
    <location>
        <position position="346"/>
    </location>
</feature>
<feature type="sequence variant" description="In strain: CDC84-060418, CDC77-124615 and CDC84-060384.">
    <original>F</original>
    <variation>L</variation>
    <location>
        <position position="504"/>
    </location>
</feature>
<feature type="sequence variant" description="In strain: CDC84-060418, CDC77-124615 and CDC84-060384.">
    <original>A</original>
    <variation>V</variation>
    <location>
        <position position="510"/>
    </location>
</feature>
<feature type="sequence variant" description="In strain: CDC84-060418, CDC77-124615 and CDC84-060384.">
    <original>A</original>
    <variation>G</variation>
    <location>
        <position position="516"/>
    </location>
</feature>
<feature type="sequence variant" description="In strain: FA19 and CDC84-060418.">
    <original>H</original>
    <variation>N</variation>
    <location>
        <position position="541"/>
    </location>
</feature>
<feature type="sequence variant" description="In strain: CDC84-060384.">
    <original>P</original>
    <variation>L</variation>
    <location>
        <position position="551"/>
    </location>
</feature>
<feature type="sequence variant" description="In strain: CDC77-124615.">
    <original>P</original>
    <variation>S</variation>
    <location>
        <position position="551"/>
    </location>
</feature>
<feature type="sequence variant" description="In strain: CDC84-060418.">
    <original>P</original>
    <variation>V</variation>
    <location>
        <position position="552"/>
    </location>
</feature>
<feature type="sequence variant" description="In strain: CDC84-060418.">
    <original>KI</original>
    <variation>QV</variation>
    <location>
        <begin position="555"/>
        <end position="556"/>
    </location>
</feature>
<feature type="sequence variant" description="In strain: CDC84-060418.">
    <original>I</original>
    <variation>V</variation>
    <location>
        <position position="566"/>
    </location>
</feature>
<feature type="sequence variant" description="In strain: CDC84-060418.">
    <original>A</original>
    <variation>NV</variation>
    <location>
        <position position="574"/>
    </location>
</feature>
<feature type="helix" evidence="5">
    <location>
        <begin position="55"/>
        <end position="57"/>
    </location>
</feature>
<feature type="strand" evidence="4">
    <location>
        <begin position="65"/>
        <end position="71"/>
    </location>
</feature>
<feature type="strand" evidence="4">
    <location>
        <begin position="85"/>
        <end position="91"/>
    </location>
</feature>
<feature type="strand" evidence="4">
    <location>
        <begin position="165"/>
        <end position="168"/>
    </location>
</feature>
<feature type="helix" evidence="4">
    <location>
        <begin position="172"/>
        <end position="175"/>
    </location>
</feature>
<feature type="helix" evidence="4">
    <location>
        <begin position="176"/>
        <end position="179"/>
    </location>
</feature>
<feature type="strand" evidence="4">
    <location>
        <begin position="188"/>
        <end position="190"/>
    </location>
</feature>
<feature type="helix" evidence="4">
    <location>
        <begin position="191"/>
        <end position="195"/>
    </location>
</feature>
<feature type="helix" evidence="4">
    <location>
        <begin position="197"/>
        <end position="201"/>
    </location>
</feature>
<feature type="strand" evidence="4">
    <location>
        <begin position="205"/>
        <end position="211"/>
    </location>
</feature>
<feature type="strand" evidence="4">
    <location>
        <begin position="217"/>
        <end position="220"/>
    </location>
</feature>
<feature type="strand" evidence="4">
    <location>
        <begin position="235"/>
        <end position="238"/>
    </location>
</feature>
<feature type="helix" evidence="6">
    <location>
        <begin position="241"/>
        <end position="257"/>
    </location>
</feature>
<feature type="strand" evidence="6">
    <location>
        <begin position="261"/>
        <end position="269"/>
    </location>
</feature>
<feature type="turn" evidence="6">
    <location>
        <begin position="270"/>
        <end position="272"/>
    </location>
</feature>
<feature type="strand" evidence="6">
    <location>
        <begin position="274"/>
        <end position="280"/>
    </location>
</feature>
<feature type="helix" evidence="4">
    <location>
        <begin position="289"/>
        <end position="291"/>
    </location>
</feature>
<feature type="helix" evidence="4">
    <location>
        <begin position="294"/>
        <end position="297"/>
    </location>
</feature>
<feature type="helix" evidence="6">
    <location>
        <begin position="300"/>
        <end position="303"/>
    </location>
</feature>
<feature type="helix" evidence="6">
    <location>
        <begin position="309"/>
        <end position="312"/>
    </location>
</feature>
<feature type="helix" evidence="6">
    <location>
        <begin position="313"/>
        <end position="322"/>
    </location>
</feature>
<feature type="strand" evidence="6">
    <location>
        <begin position="331"/>
        <end position="333"/>
    </location>
</feature>
<feature type="strand" evidence="6">
    <location>
        <begin position="337"/>
        <end position="339"/>
    </location>
</feature>
<feature type="strand" evidence="6">
    <location>
        <begin position="342"/>
        <end position="344"/>
    </location>
</feature>
<feature type="strand" evidence="6">
    <location>
        <begin position="351"/>
        <end position="354"/>
    </location>
</feature>
<feature type="helix" evidence="6">
    <location>
        <begin position="355"/>
        <end position="360"/>
    </location>
</feature>
<feature type="helix" evidence="6">
    <location>
        <begin position="364"/>
        <end position="371"/>
    </location>
</feature>
<feature type="helix" evidence="6">
    <location>
        <begin position="376"/>
        <end position="385"/>
    </location>
</feature>
<feature type="turn" evidence="6">
    <location>
        <begin position="386"/>
        <end position="389"/>
    </location>
</feature>
<feature type="helix" evidence="6">
    <location>
        <begin position="407"/>
        <end position="409"/>
    </location>
</feature>
<feature type="helix" evidence="6">
    <location>
        <begin position="412"/>
        <end position="419"/>
    </location>
</feature>
<feature type="strand" evidence="6">
    <location>
        <begin position="425"/>
        <end position="427"/>
    </location>
</feature>
<feature type="helix" evidence="6">
    <location>
        <begin position="428"/>
        <end position="439"/>
    </location>
</feature>
<feature type="turn" evidence="6">
    <location>
        <begin position="440"/>
        <end position="442"/>
    </location>
</feature>
<feature type="strand" evidence="6">
    <location>
        <begin position="448"/>
        <end position="450"/>
    </location>
</feature>
<feature type="helix" evidence="6">
    <location>
        <begin position="464"/>
        <end position="474"/>
    </location>
</feature>
<feature type="helix" evidence="6">
    <location>
        <begin position="475"/>
        <end position="477"/>
    </location>
</feature>
<feature type="helix" evidence="6">
    <location>
        <begin position="485"/>
        <end position="487"/>
    </location>
</feature>
<feature type="strand" evidence="6">
    <location>
        <begin position="495"/>
        <end position="526"/>
    </location>
</feature>
<feature type="strand" evidence="6">
    <location>
        <begin position="529"/>
        <end position="537"/>
    </location>
</feature>
<feature type="helix" evidence="6">
    <location>
        <begin position="545"/>
        <end position="563"/>
    </location>
</feature>
<keyword id="KW-0002">3D-structure</keyword>
<keyword id="KW-0046">Antibiotic resistance</keyword>
<keyword id="KW-0121">Carboxypeptidase</keyword>
<keyword id="KW-0131">Cell cycle</keyword>
<keyword id="KW-0132">Cell division</keyword>
<keyword id="KW-0997">Cell inner membrane</keyword>
<keyword id="KW-1003">Cell membrane</keyword>
<keyword id="KW-0133">Cell shape</keyword>
<keyword id="KW-0961">Cell wall biogenesis/degradation</keyword>
<keyword id="KW-0378">Hydrolase</keyword>
<keyword id="KW-0472">Membrane</keyword>
<keyword id="KW-0573">Peptidoglycan synthesis</keyword>
<keyword id="KW-0645">Protease</keyword>
<keyword id="KW-0717">Septation</keyword>
<keyword id="KW-0812">Transmembrane</keyword>
<keyword id="KW-1133">Transmembrane helix</keyword>
<gene>
    <name evidence="1 2" type="primary">penA</name>
</gene>
<sequence length="581" mass="63650">MLIKSEYKPRMLPKEEQVKKPMTSNGRISFVLMAMAVLFACLIARGLYLQTVTYNFLKEQGDNRIVRTQALPATRGTVSDRNGAVLALSAPTESLFAVPKDMKEMPSAAQLERLSELVDVPVDVLRNKLEQKGKSFIWIKRQLDPKVAEEVKALGLENFVFEKELKRHYPMGNLFAHVIGFTDIDGKGQEGLELSLEDSLYGEDGAEVVLRDRQGNIVDSLDSPRNKAPQNGKDIILSLDQRIQTLAYEELNKAVEYHQAKAGTVVVLDARTGEILALANTPAYDPNRPGRADSEQRRNRAVTDMIEPGSAIKPFVIAKALDAGKTDLNERLNTQPYKIGPSPVRDTHVYPSLDVRGIMQKSSNVGTSKLSARFGAEEMYDFYHELGIGVRMHSGFPGETAGLLRNWRRWRPIEQATMSFGYGLQLSLLQLARAYTALTHDGVLLPLSFEKQAVAPQGKRIFKESTAREVRNLMVSVTEPGGTGTAGAVDGFDVGAKTGTARKFVNGRYADNKHVATFIGFAPAKNPRVIVAVTIDEPTAHGYYGGVVAGPPFKKIMGGSLNILGISPTKPLTAAAVKTPS</sequence>
<accession>P08149</accession>
<organism>
    <name type="scientific">Neisseria gonorrhoeae</name>
    <dbReference type="NCBI Taxonomy" id="485"/>
    <lineage>
        <taxon>Bacteria</taxon>
        <taxon>Pseudomonadati</taxon>
        <taxon>Pseudomonadota</taxon>
        <taxon>Betaproteobacteria</taxon>
        <taxon>Neisseriales</taxon>
        <taxon>Neisseriaceae</taxon>
        <taxon>Neisseria</taxon>
    </lineage>
</organism>
<evidence type="ECO:0000255" key="1">
    <source>
        <dbReference type="HAMAP-Rule" id="MF_02080"/>
    </source>
</evidence>
<evidence type="ECO:0000303" key="2">
    <source>
    </source>
</evidence>
<evidence type="ECO:0000305" key="3"/>
<evidence type="ECO:0007829" key="4">
    <source>
        <dbReference type="PDB" id="3EQU"/>
    </source>
</evidence>
<evidence type="ECO:0007829" key="5">
    <source>
        <dbReference type="PDB" id="3EQV"/>
    </source>
</evidence>
<evidence type="ECO:0007829" key="6">
    <source>
        <dbReference type="PDB" id="6HZJ"/>
    </source>
</evidence>
<protein>
    <recommendedName>
        <fullName evidence="1 3">Probable peptidoglycan D,D-transpeptidase PenA</fullName>
        <ecNumber evidence="1">3.4.16.4</ecNumber>
    </recommendedName>
    <alternativeName>
        <fullName evidence="1 2">Penicillin-binding protein 2</fullName>
        <shortName evidence="1 2">PBP-2</shortName>
    </alternativeName>
</protein>
<reference key="1">
    <citation type="journal article" date="1988" name="Nature">
        <title>Hybrid penicillin-binding proteins in penicillin-resistant strains of Neisseria gonorrhoeae.</title>
        <authorList>
            <person name="Spratt B.G."/>
        </authorList>
    </citation>
    <scope>NUCLEOTIDE SEQUENCE [GENOMIC DNA]</scope>
</reference>
<proteinExistence type="evidence at protein level"/>